<name>YM09_YEAST</name>
<feature type="chain" id="PRO_0000203296" description="Uncharacterized protein YMR122C">
    <location>
        <begin position="1"/>
        <end position="124"/>
    </location>
</feature>
<reference key="1">
    <citation type="journal article" date="1997" name="Nature">
        <title>The nucleotide sequence of Saccharomyces cerevisiae chromosome XIII.</title>
        <authorList>
            <person name="Bowman S."/>
            <person name="Churcher C.M."/>
            <person name="Badcock K."/>
            <person name="Brown D."/>
            <person name="Chillingworth T."/>
            <person name="Connor R."/>
            <person name="Dedman K."/>
            <person name="Devlin K."/>
            <person name="Gentles S."/>
            <person name="Hamlin N."/>
            <person name="Hunt S."/>
            <person name="Jagels K."/>
            <person name="Lye G."/>
            <person name="Moule S."/>
            <person name="Odell C."/>
            <person name="Pearson D."/>
            <person name="Rajandream M.A."/>
            <person name="Rice P."/>
            <person name="Skelton J."/>
            <person name="Walsh S.V."/>
            <person name="Whitehead S."/>
            <person name="Barrell B.G."/>
        </authorList>
    </citation>
    <scope>NUCLEOTIDE SEQUENCE [LARGE SCALE GENOMIC DNA]</scope>
    <source>
        <strain>ATCC 204508 / S288c</strain>
    </source>
</reference>
<reference key="2">
    <citation type="journal article" date="2014" name="G3 (Bethesda)">
        <title>The reference genome sequence of Saccharomyces cerevisiae: Then and now.</title>
        <authorList>
            <person name="Engel S.R."/>
            <person name="Dietrich F.S."/>
            <person name="Fisk D.G."/>
            <person name="Binkley G."/>
            <person name="Balakrishnan R."/>
            <person name="Costanzo M.C."/>
            <person name="Dwight S.S."/>
            <person name="Hitz B.C."/>
            <person name="Karra K."/>
            <person name="Nash R.S."/>
            <person name="Weng S."/>
            <person name="Wong E.D."/>
            <person name="Lloyd P."/>
            <person name="Skrzypek M.S."/>
            <person name="Miyasato S.R."/>
            <person name="Simison M."/>
            <person name="Cherry J.M."/>
        </authorList>
    </citation>
    <scope>GENOME REANNOTATION</scope>
    <source>
        <strain>ATCC 204508 / S288c</strain>
    </source>
</reference>
<reference key="3">
    <citation type="journal article" date="2007" name="Genome Res.">
        <title>Approaching a complete repository of sequence-verified protein-encoding clones for Saccharomyces cerevisiae.</title>
        <authorList>
            <person name="Hu Y."/>
            <person name="Rolfs A."/>
            <person name="Bhullar B."/>
            <person name="Murthy T.V.S."/>
            <person name="Zhu C."/>
            <person name="Berger M.F."/>
            <person name="Camargo A.A."/>
            <person name="Kelley F."/>
            <person name="McCarron S."/>
            <person name="Jepson D."/>
            <person name="Richardson A."/>
            <person name="Raphael J."/>
            <person name="Moreira D."/>
            <person name="Taycher E."/>
            <person name="Zuo D."/>
            <person name="Mohr S."/>
            <person name="Kane M.F."/>
            <person name="Williamson J."/>
            <person name="Simpson A.J.G."/>
            <person name="Bulyk M.L."/>
            <person name="Harlow E."/>
            <person name="Marsischky G."/>
            <person name="Kolodner R.D."/>
            <person name="LaBaer J."/>
        </authorList>
    </citation>
    <scope>NUCLEOTIDE SEQUENCE [GENOMIC DNA]</scope>
    <source>
        <strain>ATCC 204508 / S288c</strain>
    </source>
</reference>
<proteinExistence type="predicted"/>
<protein>
    <recommendedName>
        <fullName>Uncharacterized protein YMR122C</fullName>
    </recommendedName>
</protein>
<organism>
    <name type="scientific">Saccharomyces cerevisiae (strain ATCC 204508 / S288c)</name>
    <name type="common">Baker's yeast</name>
    <dbReference type="NCBI Taxonomy" id="559292"/>
    <lineage>
        <taxon>Eukaryota</taxon>
        <taxon>Fungi</taxon>
        <taxon>Dikarya</taxon>
        <taxon>Ascomycota</taxon>
        <taxon>Saccharomycotina</taxon>
        <taxon>Saccharomycetes</taxon>
        <taxon>Saccharomycetales</taxon>
        <taxon>Saccharomycetaceae</taxon>
        <taxon>Saccharomyces</taxon>
    </lineage>
</organism>
<accession>Q03879</accession>
<accession>A0A1S0T0A4</accession>
<keyword id="KW-1185">Reference proteome</keyword>
<dbReference type="EMBL" id="Z49273">
    <property type="protein sequence ID" value="CAA89271.1"/>
    <property type="molecule type" value="Genomic_DNA"/>
</dbReference>
<dbReference type="EMBL" id="AY558411">
    <property type="protein sequence ID" value="AAS56737.1"/>
    <property type="molecule type" value="Genomic_DNA"/>
</dbReference>
<dbReference type="EMBL" id="BK006946">
    <property type="protein sequence ID" value="DAA80327.1"/>
    <property type="molecule type" value="Genomic_DNA"/>
</dbReference>
<dbReference type="PIR" id="S54491">
    <property type="entry name" value="S54491"/>
</dbReference>
<dbReference type="RefSeq" id="NP_001335807.1">
    <property type="nucleotide sequence ID" value="NM_001348867.1"/>
</dbReference>
<dbReference type="FunCoup" id="Q03879">
    <property type="interactions" value="42"/>
</dbReference>
<dbReference type="IntAct" id="Q03879">
    <property type="interactions" value="1"/>
</dbReference>
<dbReference type="PaxDb" id="4932-YMR122C"/>
<dbReference type="EnsemblFungi" id="YMR122C_mRNA">
    <property type="protein sequence ID" value="YMR122C"/>
    <property type="gene ID" value="YMR122C"/>
</dbReference>
<dbReference type="GeneID" id="855151"/>
<dbReference type="AGR" id="SGD:S000004729"/>
<dbReference type="SGD" id="S000004729">
    <property type="gene designation" value="YMR122C"/>
</dbReference>
<dbReference type="HOGENOM" id="CLU_2005686_0_0_1"/>
<dbReference type="InParanoid" id="Q03879"/>
<dbReference type="OrthoDB" id="10270353at2759"/>
<dbReference type="PRO" id="PR:Q03879"/>
<dbReference type="Proteomes" id="UP000002311">
    <property type="component" value="Chromosome XIII"/>
</dbReference>
<dbReference type="RNAct" id="Q03879">
    <property type="molecule type" value="protein"/>
</dbReference>
<sequence length="124" mass="14146">MLRQFGGVFRNLRVPERTNALLFAQHKGDERHSGQRAFDGSKFRLEAKRCFTAICIITVARRDRLGVLVCGKNTASTLPYLPANRIFRLPKVQIRKMFPIGCATFLSREYIITALLVSYCHLCV</sequence>
<gene>
    <name type="ordered locus">YMR122C</name>
    <name type="ORF">YM8564.04C</name>
</gene>